<sequence>MALHDENVVWHSHPVTVAAREQLHGHRGVVLWFTGLSGSGKSTVAGALEEALHQRGVSTYLLDGDNVRHGLCRDLGFSDADRQENIRRVGEVASLMADAGLIVLTAFISPHRAERQLVKERVGHDRFIEIYVNTPLAICEQRDPKGLYKKARAGELRNFTGIDAIYEAPDSPQVHLNGEQLVTNLVSQLLDLLRRRDIIRS</sequence>
<feature type="chain" id="PRO_1000092245" description="Adenylyl-sulfate kinase">
    <location>
        <begin position="1"/>
        <end position="201"/>
    </location>
</feature>
<feature type="active site" description="Phosphoserine intermediate" evidence="1">
    <location>
        <position position="109"/>
    </location>
</feature>
<feature type="binding site" evidence="1">
    <location>
        <begin position="35"/>
        <end position="42"/>
    </location>
    <ligand>
        <name>ATP</name>
        <dbReference type="ChEBI" id="CHEBI:30616"/>
    </ligand>
</feature>
<gene>
    <name evidence="1" type="primary">cysC</name>
    <name type="ordered locus">SeD_A3243</name>
</gene>
<reference key="1">
    <citation type="journal article" date="2011" name="J. Bacteriol.">
        <title>Comparative genomics of 28 Salmonella enterica isolates: evidence for CRISPR-mediated adaptive sublineage evolution.</title>
        <authorList>
            <person name="Fricke W.F."/>
            <person name="Mammel M.K."/>
            <person name="McDermott P.F."/>
            <person name="Tartera C."/>
            <person name="White D.G."/>
            <person name="Leclerc J.E."/>
            <person name="Ravel J."/>
            <person name="Cebula T.A."/>
        </authorList>
    </citation>
    <scope>NUCLEOTIDE SEQUENCE [LARGE SCALE GENOMIC DNA]</scope>
    <source>
        <strain>CT_02021853</strain>
    </source>
</reference>
<accession>B5FTS8</accession>
<protein>
    <recommendedName>
        <fullName evidence="1">Adenylyl-sulfate kinase</fullName>
        <ecNumber evidence="1">2.7.1.25</ecNumber>
    </recommendedName>
    <alternativeName>
        <fullName evidence="1">APS kinase</fullName>
    </alternativeName>
    <alternativeName>
        <fullName evidence="1">ATP adenosine-5'-phosphosulfate 3'-phosphotransferase</fullName>
    </alternativeName>
    <alternativeName>
        <fullName evidence="1">Adenosine-5'-phosphosulfate kinase</fullName>
    </alternativeName>
</protein>
<proteinExistence type="inferred from homology"/>
<comment type="function">
    <text evidence="1">Catalyzes the synthesis of activated sulfate.</text>
</comment>
<comment type="catalytic activity">
    <reaction evidence="1">
        <text>adenosine 5'-phosphosulfate + ATP = 3'-phosphoadenylyl sulfate + ADP + H(+)</text>
        <dbReference type="Rhea" id="RHEA:24152"/>
        <dbReference type="ChEBI" id="CHEBI:15378"/>
        <dbReference type="ChEBI" id="CHEBI:30616"/>
        <dbReference type="ChEBI" id="CHEBI:58243"/>
        <dbReference type="ChEBI" id="CHEBI:58339"/>
        <dbReference type="ChEBI" id="CHEBI:456216"/>
        <dbReference type="EC" id="2.7.1.25"/>
    </reaction>
</comment>
<comment type="pathway">
    <text evidence="1">Sulfur metabolism; hydrogen sulfide biosynthesis; sulfite from sulfate: step 2/3.</text>
</comment>
<comment type="similarity">
    <text evidence="1">Belongs to the APS kinase family.</text>
</comment>
<organism>
    <name type="scientific">Salmonella dublin (strain CT_02021853)</name>
    <dbReference type="NCBI Taxonomy" id="439851"/>
    <lineage>
        <taxon>Bacteria</taxon>
        <taxon>Pseudomonadati</taxon>
        <taxon>Pseudomonadota</taxon>
        <taxon>Gammaproteobacteria</taxon>
        <taxon>Enterobacterales</taxon>
        <taxon>Enterobacteriaceae</taxon>
        <taxon>Salmonella</taxon>
    </lineage>
</organism>
<dbReference type="EC" id="2.7.1.25" evidence="1"/>
<dbReference type="EMBL" id="CP001144">
    <property type="protein sequence ID" value="ACH75974.1"/>
    <property type="molecule type" value="Genomic_DNA"/>
</dbReference>
<dbReference type="RefSeq" id="WP_001173663.1">
    <property type="nucleotide sequence ID" value="NC_011205.1"/>
</dbReference>
<dbReference type="SMR" id="B5FTS8"/>
<dbReference type="KEGG" id="sed:SeD_A3243"/>
<dbReference type="HOGENOM" id="CLU_046932_1_0_6"/>
<dbReference type="UniPathway" id="UPA00140">
    <property type="reaction ID" value="UER00205"/>
</dbReference>
<dbReference type="Proteomes" id="UP000008322">
    <property type="component" value="Chromosome"/>
</dbReference>
<dbReference type="GO" id="GO:0004020">
    <property type="term" value="F:adenylylsulfate kinase activity"/>
    <property type="evidence" value="ECO:0007669"/>
    <property type="project" value="UniProtKB-UniRule"/>
</dbReference>
<dbReference type="GO" id="GO:0005524">
    <property type="term" value="F:ATP binding"/>
    <property type="evidence" value="ECO:0007669"/>
    <property type="project" value="UniProtKB-UniRule"/>
</dbReference>
<dbReference type="GO" id="GO:0070814">
    <property type="term" value="P:hydrogen sulfide biosynthetic process"/>
    <property type="evidence" value="ECO:0007669"/>
    <property type="project" value="UniProtKB-UniRule"/>
</dbReference>
<dbReference type="GO" id="GO:0000103">
    <property type="term" value="P:sulfate assimilation"/>
    <property type="evidence" value="ECO:0007669"/>
    <property type="project" value="UniProtKB-UniRule"/>
</dbReference>
<dbReference type="CDD" id="cd02027">
    <property type="entry name" value="APSK"/>
    <property type="match status" value="1"/>
</dbReference>
<dbReference type="FunFam" id="3.40.50.300:FF:000212">
    <property type="entry name" value="Adenylyl-sulfate kinase"/>
    <property type="match status" value="1"/>
</dbReference>
<dbReference type="Gene3D" id="3.40.50.300">
    <property type="entry name" value="P-loop containing nucleotide triphosphate hydrolases"/>
    <property type="match status" value="1"/>
</dbReference>
<dbReference type="HAMAP" id="MF_00065">
    <property type="entry name" value="Adenylyl_sulf_kinase"/>
    <property type="match status" value="1"/>
</dbReference>
<dbReference type="InterPro" id="IPR002891">
    <property type="entry name" value="APS_kinase"/>
</dbReference>
<dbReference type="InterPro" id="IPR027417">
    <property type="entry name" value="P-loop_NTPase"/>
</dbReference>
<dbReference type="NCBIfam" id="TIGR00455">
    <property type="entry name" value="apsK"/>
    <property type="match status" value="1"/>
</dbReference>
<dbReference type="NCBIfam" id="NF003013">
    <property type="entry name" value="PRK03846.1"/>
    <property type="match status" value="1"/>
</dbReference>
<dbReference type="PANTHER" id="PTHR11055:SF63">
    <property type="entry name" value="ADENYLYL-SULFATE KINASE 1, CHLOROPLASTIC"/>
    <property type="match status" value="1"/>
</dbReference>
<dbReference type="PANTHER" id="PTHR11055">
    <property type="entry name" value="BIFUNCTIONAL 3'-PHOSPHOADENOSINE 5'-PHOSPHOSULFATE SYNTHASE"/>
    <property type="match status" value="1"/>
</dbReference>
<dbReference type="Pfam" id="PF01583">
    <property type="entry name" value="APS_kinase"/>
    <property type="match status" value="1"/>
</dbReference>
<dbReference type="SUPFAM" id="SSF52540">
    <property type="entry name" value="P-loop containing nucleoside triphosphate hydrolases"/>
    <property type="match status" value="1"/>
</dbReference>
<name>CYSC_SALDC</name>
<evidence type="ECO:0000255" key="1">
    <source>
        <dbReference type="HAMAP-Rule" id="MF_00065"/>
    </source>
</evidence>
<keyword id="KW-0067">ATP-binding</keyword>
<keyword id="KW-0418">Kinase</keyword>
<keyword id="KW-0547">Nucleotide-binding</keyword>
<keyword id="KW-0597">Phosphoprotein</keyword>
<keyword id="KW-0808">Transferase</keyword>